<organism>
    <name type="scientific">Escherichia coli (strain ATCC 8739 / DSM 1576 / NBRC 3972 / NCIMB 8545 / WDCM 00012 / Crooks)</name>
    <dbReference type="NCBI Taxonomy" id="481805"/>
    <lineage>
        <taxon>Bacteria</taxon>
        <taxon>Pseudomonadati</taxon>
        <taxon>Pseudomonadota</taxon>
        <taxon>Gammaproteobacteria</taxon>
        <taxon>Enterobacterales</taxon>
        <taxon>Enterobacteriaceae</taxon>
        <taxon>Escherichia</taxon>
    </lineage>
</organism>
<name>USPB_ECOLC</name>
<accession>B1J0D8</accession>
<sequence length="111" mass="13027">MISTVALFWALCVVCIVNMARYFSSLRALLVVLRNCDPLLYQYVDGGGFFTSHGQPNKQVRLVWYIYAQRYRDHHDDEFIRRCERVRRQFILTSALCGLVVVSLIALMIWH</sequence>
<comment type="subcellular location">
    <subcellularLocation>
        <location evidence="1">Cell inner membrane</location>
        <topology evidence="1">Multi-pass membrane protein</topology>
    </subcellularLocation>
</comment>
<comment type="similarity">
    <text evidence="1">Belongs to the universal stress protein B family.</text>
</comment>
<evidence type="ECO:0000255" key="1">
    <source>
        <dbReference type="HAMAP-Rule" id="MF_01088"/>
    </source>
</evidence>
<reference key="1">
    <citation type="submission" date="2008-02" db="EMBL/GenBank/DDBJ databases">
        <title>Complete sequence of Escherichia coli C str. ATCC 8739.</title>
        <authorList>
            <person name="Copeland A."/>
            <person name="Lucas S."/>
            <person name="Lapidus A."/>
            <person name="Glavina del Rio T."/>
            <person name="Dalin E."/>
            <person name="Tice H."/>
            <person name="Bruce D."/>
            <person name="Goodwin L."/>
            <person name="Pitluck S."/>
            <person name="Kiss H."/>
            <person name="Brettin T."/>
            <person name="Detter J.C."/>
            <person name="Han C."/>
            <person name="Kuske C.R."/>
            <person name="Schmutz J."/>
            <person name="Larimer F."/>
            <person name="Land M."/>
            <person name="Hauser L."/>
            <person name="Kyrpides N."/>
            <person name="Mikhailova N."/>
            <person name="Ingram L."/>
            <person name="Richardson P."/>
        </authorList>
    </citation>
    <scope>NUCLEOTIDE SEQUENCE [LARGE SCALE GENOMIC DNA]</scope>
    <source>
        <strain>ATCC 8739 / DSM 1576 / NBRC 3972 / NCIMB 8545 / WDCM 00012 / Crooks</strain>
    </source>
</reference>
<feature type="chain" id="PRO_1000084783" description="Universal stress protein B">
    <location>
        <begin position="1"/>
        <end position="111"/>
    </location>
</feature>
<feature type="transmembrane region" description="Helical" evidence="1">
    <location>
        <begin position="1"/>
        <end position="21"/>
    </location>
</feature>
<feature type="transmembrane region" description="Helical" evidence="1">
    <location>
        <begin position="90"/>
        <end position="110"/>
    </location>
</feature>
<protein>
    <recommendedName>
        <fullName evidence="1">Universal stress protein B</fullName>
    </recommendedName>
</protein>
<gene>
    <name evidence="1" type="primary">uspB</name>
    <name type="ordered locus">EcolC_0222</name>
</gene>
<dbReference type="EMBL" id="CP000946">
    <property type="protein sequence ID" value="ACA75903.1"/>
    <property type="molecule type" value="Genomic_DNA"/>
</dbReference>
<dbReference type="RefSeq" id="WP_000626187.1">
    <property type="nucleotide sequence ID" value="NZ_MTFT01000051.1"/>
</dbReference>
<dbReference type="SMR" id="B1J0D8"/>
<dbReference type="GeneID" id="93778499"/>
<dbReference type="KEGG" id="ecl:EcolC_0222"/>
<dbReference type="HOGENOM" id="CLU_151816_0_0_6"/>
<dbReference type="GO" id="GO:0005886">
    <property type="term" value="C:plasma membrane"/>
    <property type="evidence" value="ECO:0007669"/>
    <property type="project" value="UniProtKB-SubCell"/>
</dbReference>
<dbReference type="HAMAP" id="MF_01088">
    <property type="entry name" value="UspB"/>
    <property type="match status" value="1"/>
</dbReference>
<dbReference type="InterPro" id="IPR019598">
    <property type="entry name" value="Universal_stress_protein_B"/>
</dbReference>
<dbReference type="NCBIfam" id="NF003435">
    <property type="entry name" value="PRK04960.1"/>
    <property type="match status" value="1"/>
</dbReference>
<dbReference type="Pfam" id="PF10625">
    <property type="entry name" value="UspB"/>
    <property type="match status" value="1"/>
</dbReference>
<keyword id="KW-0997">Cell inner membrane</keyword>
<keyword id="KW-1003">Cell membrane</keyword>
<keyword id="KW-0472">Membrane</keyword>
<keyword id="KW-0812">Transmembrane</keyword>
<keyword id="KW-1133">Transmembrane helix</keyword>
<proteinExistence type="inferred from homology"/>